<evidence type="ECO:0000250" key="1">
    <source>
        <dbReference type="UniProtKB" id="O48814"/>
    </source>
</evidence>
<evidence type="ECO:0000255" key="2"/>
<evidence type="ECO:0000255" key="3">
    <source>
        <dbReference type="PROSITE-ProRule" id="PRU00159"/>
    </source>
</evidence>
<evidence type="ECO:0000255" key="4">
    <source>
        <dbReference type="PROSITE-ProRule" id="PRU00806"/>
    </source>
</evidence>
<evidence type="ECO:0000255" key="5">
    <source>
        <dbReference type="PROSITE-ProRule" id="PRU10027"/>
    </source>
</evidence>
<evidence type="ECO:0000256" key="6">
    <source>
        <dbReference type="SAM" id="MobiDB-lite"/>
    </source>
</evidence>
<evidence type="ECO:0000269" key="7">
    <source>
    </source>
</evidence>
<evidence type="ECO:0000269" key="8">
    <source>
    </source>
</evidence>
<evidence type="ECO:0000303" key="9">
    <source>
    </source>
</evidence>
<evidence type="ECO:0000305" key="10"/>
<comment type="catalytic activity">
    <reaction>
        <text>L-seryl-[protein] + ATP = O-phospho-L-seryl-[protein] + ADP + H(+)</text>
        <dbReference type="Rhea" id="RHEA:17989"/>
        <dbReference type="Rhea" id="RHEA-COMP:9863"/>
        <dbReference type="Rhea" id="RHEA-COMP:11604"/>
        <dbReference type="ChEBI" id="CHEBI:15378"/>
        <dbReference type="ChEBI" id="CHEBI:29999"/>
        <dbReference type="ChEBI" id="CHEBI:30616"/>
        <dbReference type="ChEBI" id="CHEBI:83421"/>
        <dbReference type="ChEBI" id="CHEBI:456216"/>
    </reaction>
</comment>
<comment type="catalytic activity">
    <reaction>
        <text>L-threonyl-[protein] + ATP = O-phospho-L-threonyl-[protein] + ADP + H(+)</text>
        <dbReference type="Rhea" id="RHEA:46608"/>
        <dbReference type="Rhea" id="RHEA-COMP:11060"/>
        <dbReference type="Rhea" id="RHEA-COMP:11605"/>
        <dbReference type="ChEBI" id="CHEBI:15378"/>
        <dbReference type="ChEBI" id="CHEBI:30013"/>
        <dbReference type="ChEBI" id="CHEBI:30616"/>
        <dbReference type="ChEBI" id="CHEBI:61977"/>
        <dbReference type="ChEBI" id="CHEBI:456216"/>
    </reaction>
</comment>
<comment type="subunit">
    <text evidence="8">Interacts with MWL1.</text>
</comment>
<comment type="subcellular location">
    <subcellularLocation>
        <location evidence="10">Membrane</location>
        <topology evidence="10">Single-pass membrane protein</topology>
    </subcellularLocation>
</comment>
<comment type="alternative products">
    <event type="alternative splicing"/>
    <isoform>
        <id>Q8GWJ7-1</id>
        <name>1</name>
        <sequence type="displayed"/>
    </isoform>
    <isoform>
        <id>Q8GWJ7-2</id>
        <name>2</name>
        <sequence type="described" ref="VSP_026693 VSP_026694"/>
    </isoform>
</comment>
<comment type="induction">
    <text evidence="7">By salicylic acid (SA) or by a bacterial pathogen infection.</text>
</comment>
<comment type="miscellaneous">
    <molecule>Isoform 2</molecule>
    <text evidence="10">May be due to a competing acceptor splice site.</text>
</comment>
<comment type="similarity">
    <text evidence="3">Belongs to the protein kinase superfamily. Ser/Thr protein kinase family. CRK subfamily.</text>
</comment>
<comment type="sequence caution" evidence="10">
    <conflict type="erroneous gene model prediction">
        <sequence resource="EMBL-CDS" id="CAA18474"/>
    </conflict>
</comment>
<comment type="sequence caution" evidence="10">
    <conflict type="erroneous gene model prediction">
        <sequence resource="EMBL-CDS" id="CAB79282"/>
    </conflict>
</comment>
<accession>Q8GWJ7</accession>
<accession>O65478</accession>
<name>CRK19_ARATH</name>
<proteinExistence type="evidence at protein level"/>
<reference key="1">
    <citation type="journal article" date="1999" name="Nature">
        <title>Sequence and analysis of chromosome 4 of the plant Arabidopsis thaliana.</title>
        <authorList>
            <person name="Mayer K.F.X."/>
            <person name="Schueller C."/>
            <person name="Wambutt R."/>
            <person name="Murphy G."/>
            <person name="Volckaert G."/>
            <person name="Pohl T."/>
            <person name="Duesterhoeft A."/>
            <person name="Stiekema W."/>
            <person name="Entian K.-D."/>
            <person name="Terryn N."/>
            <person name="Harris B."/>
            <person name="Ansorge W."/>
            <person name="Brandt P."/>
            <person name="Grivell L.A."/>
            <person name="Rieger M."/>
            <person name="Weichselgartner M."/>
            <person name="de Simone V."/>
            <person name="Obermaier B."/>
            <person name="Mache R."/>
            <person name="Mueller M."/>
            <person name="Kreis M."/>
            <person name="Delseny M."/>
            <person name="Puigdomenech P."/>
            <person name="Watson M."/>
            <person name="Schmidtheini T."/>
            <person name="Reichert B."/>
            <person name="Portetelle D."/>
            <person name="Perez-Alonso M."/>
            <person name="Boutry M."/>
            <person name="Bancroft I."/>
            <person name="Vos P."/>
            <person name="Hoheisel J."/>
            <person name="Zimmermann W."/>
            <person name="Wedler H."/>
            <person name="Ridley P."/>
            <person name="Langham S.-A."/>
            <person name="McCullagh B."/>
            <person name="Bilham L."/>
            <person name="Robben J."/>
            <person name="van der Schueren J."/>
            <person name="Grymonprez B."/>
            <person name="Chuang Y.-J."/>
            <person name="Vandenbussche F."/>
            <person name="Braeken M."/>
            <person name="Weltjens I."/>
            <person name="Voet M."/>
            <person name="Bastiaens I."/>
            <person name="Aert R."/>
            <person name="Defoor E."/>
            <person name="Weitzenegger T."/>
            <person name="Bothe G."/>
            <person name="Ramsperger U."/>
            <person name="Hilbert H."/>
            <person name="Braun M."/>
            <person name="Holzer E."/>
            <person name="Brandt A."/>
            <person name="Peters S."/>
            <person name="van Staveren M."/>
            <person name="Dirkse W."/>
            <person name="Mooijman P."/>
            <person name="Klein Lankhorst R."/>
            <person name="Rose M."/>
            <person name="Hauf J."/>
            <person name="Koetter P."/>
            <person name="Berneiser S."/>
            <person name="Hempel S."/>
            <person name="Feldpausch M."/>
            <person name="Lamberth S."/>
            <person name="Van den Daele H."/>
            <person name="De Keyser A."/>
            <person name="Buysshaert C."/>
            <person name="Gielen J."/>
            <person name="Villarroel R."/>
            <person name="De Clercq R."/>
            <person name="van Montagu M."/>
            <person name="Rogers J."/>
            <person name="Cronin A."/>
            <person name="Quail M.A."/>
            <person name="Bray-Allen S."/>
            <person name="Clark L."/>
            <person name="Doggett J."/>
            <person name="Hall S."/>
            <person name="Kay M."/>
            <person name="Lennard N."/>
            <person name="McLay K."/>
            <person name="Mayes R."/>
            <person name="Pettett A."/>
            <person name="Rajandream M.A."/>
            <person name="Lyne M."/>
            <person name="Benes V."/>
            <person name="Rechmann S."/>
            <person name="Borkova D."/>
            <person name="Bloecker H."/>
            <person name="Scharfe M."/>
            <person name="Grimm M."/>
            <person name="Loehnert T.-H."/>
            <person name="Dose S."/>
            <person name="de Haan M."/>
            <person name="Maarse A.C."/>
            <person name="Schaefer M."/>
            <person name="Mueller-Auer S."/>
            <person name="Gabel C."/>
            <person name="Fuchs M."/>
            <person name="Fartmann B."/>
            <person name="Granderath K."/>
            <person name="Dauner D."/>
            <person name="Herzl A."/>
            <person name="Neumann S."/>
            <person name="Argiriou A."/>
            <person name="Vitale D."/>
            <person name="Liguori R."/>
            <person name="Piravandi E."/>
            <person name="Massenet O."/>
            <person name="Quigley F."/>
            <person name="Clabauld G."/>
            <person name="Muendlein A."/>
            <person name="Felber R."/>
            <person name="Schnabl S."/>
            <person name="Hiller R."/>
            <person name="Schmidt W."/>
            <person name="Lecharny A."/>
            <person name="Aubourg S."/>
            <person name="Chefdor F."/>
            <person name="Cooke R."/>
            <person name="Berger C."/>
            <person name="Monfort A."/>
            <person name="Casacuberta E."/>
            <person name="Gibbons T."/>
            <person name="Weber N."/>
            <person name="Vandenbol M."/>
            <person name="Bargues M."/>
            <person name="Terol J."/>
            <person name="Torres A."/>
            <person name="Perez-Perez A."/>
            <person name="Purnelle B."/>
            <person name="Bent E."/>
            <person name="Johnson S."/>
            <person name="Tacon D."/>
            <person name="Jesse T."/>
            <person name="Heijnen L."/>
            <person name="Schwarz S."/>
            <person name="Scholler P."/>
            <person name="Heber S."/>
            <person name="Francs P."/>
            <person name="Bielke C."/>
            <person name="Frishman D."/>
            <person name="Haase D."/>
            <person name="Lemcke K."/>
            <person name="Mewes H.-W."/>
            <person name="Stocker S."/>
            <person name="Zaccaria P."/>
            <person name="Bevan M."/>
            <person name="Wilson R.K."/>
            <person name="de la Bastide M."/>
            <person name="Habermann K."/>
            <person name="Parnell L."/>
            <person name="Dedhia N."/>
            <person name="Gnoj L."/>
            <person name="Schutz K."/>
            <person name="Huang E."/>
            <person name="Spiegel L."/>
            <person name="Sekhon M."/>
            <person name="Murray J."/>
            <person name="Sheet P."/>
            <person name="Cordes M."/>
            <person name="Abu-Threideh J."/>
            <person name="Stoneking T."/>
            <person name="Kalicki J."/>
            <person name="Graves T."/>
            <person name="Harmon G."/>
            <person name="Edwards J."/>
            <person name="Latreille P."/>
            <person name="Courtney L."/>
            <person name="Cloud J."/>
            <person name="Abbott A."/>
            <person name="Scott K."/>
            <person name="Johnson D."/>
            <person name="Minx P."/>
            <person name="Bentley D."/>
            <person name="Fulton B."/>
            <person name="Miller N."/>
            <person name="Greco T."/>
            <person name="Kemp K."/>
            <person name="Kramer J."/>
            <person name="Fulton L."/>
            <person name="Mardis E."/>
            <person name="Dante M."/>
            <person name="Pepin K."/>
            <person name="Hillier L.W."/>
            <person name="Nelson J."/>
            <person name="Spieth J."/>
            <person name="Ryan E."/>
            <person name="Andrews S."/>
            <person name="Geisel C."/>
            <person name="Layman D."/>
            <person name="Du H."/>
            <person name="Ali J."/>
            <person name="Berghoff A."/>
            <person name="Jones K."/>
            <person name="Drone K."/>
            <person name="Cotton M."/>
            <person name="Joshu C."/>
            <person name="Antonoiu B."/>
            <person name="Zidanic M."/>
            <person name="Strong C."/>
            <person name="Sun H."/>
            <person name="Lamar B."/>
            <person name="Yordan C."/>
            <person name="Ma P."/>
            <person name="Zhong J."/>
            <person name="Preston R."/>
            <person name="Vil D."/>
            <person name="Shekher M."/>
            <person name="Matero A."/>
            <person name="Shah R."/>
            <person name="Swaby I.K."/>
            <person name="O'Shaughnessy A."/>
            <person name="Rodriguez M."/>
            <person name="Hoffman J."/>
            <person name="Till S."/>
            <person name="Granat S."/>
            <person name="Shohdy N."/>
            <person name="Hasegawa A."/>
            <person name="Hameed A."/>
            <person name="Lodhi M."/>
            <person name="Johnson A."/>
            <person name="Chen E."/>
            <person name="Marra M.A."/>
            <person name="Martienssen R."/>
            <person name="McCombie W.R."/>
        </authorList>
    </citation>
    <scope>NUCLEOTIDE SEQUENCE [LARGE SCALE GENOMIC DNA]</scope>
    <source>
        <strain>cv. Columbia</strain>
    </source>
</reference>
<reference key="2">
    <citation type="journal article" date="2017" name="Plant J.">
        <title>Araport11: a complete reannotation of the Arabidopsis thaliana reference genome.</title>
        <authorList>
            <person name="Cheng C.Y."/>
            <person name="Krishnakumar V."/>
            <person name="Chan A.P."/>
            <person name="Thibaud-Nissen F."/>
            <person name="Schobel S."/>
            <person name="Town C.D."/>
        </authorList>
    </citation>
    <scope>GENOME REANNOTATION</scope>
    <source>
        <strain>cv. Columbia</strain>
    </source>
</reference>
<reference key="3">
    <citation type="journal article" date="2002" name="Science">
        <title>Functional annotation of a full-length Arabidopsis cDNA collection.</title>
        <authorList>
            <person name="Seki M."/>
            <person name="Narusaka M."/>
            <person name="Kamiya A."/>
            <person name="Ishida J."/>
            <person name="Satou M."/>
            <person name="Sakurai T."/>
            <person name="Nakajima M."/>
            <person name="Enju A."/>
            <person name="Akiyama K."/>
            <person name="Oono Y."/>
            <person name="Muramatsu M."/>
            <person name="Hayashizaki Y."/>
            <person name="Kawai J."/>
            <person name="Carninci P."/>
            <person name="Itoh M."/>
            <person name="Ishii Y."/>
            <person name="Arakawa T."/>
            <person name="Shibata K."/>
            <person name="Shinagawa A."/>
            <person name="Shinozaki K."/>
        </authorList>
    </citation>
    <scope>NUCLEOTIDE SEQUENCE [LARGE SCALE MRNA] (ISOFORM 2)</scope>
    <source>
        <strain>cv. Columbia</strain>
    </source>
</reference>
<reference key="4">
    <citation type="journal article" date="2001" name="Plant Physiol.">
        <title>A superfamily of proteins with novel cysteine-rich repeats.</title>
        <authorList>
            <person name="Chen Z."/>
        </authorList>
    </citation>
    <scope>GENE FAMILY ORGANIZATION</scope>
    <scope>NOMENCLATURE</scope>
</reference>
<reference key="5">
    <citation type="journal article" date="2004" name="Plant Mol. Biol.">
        <title>Activation of hypersensitive cell death by pathogen-induced receptor-like protein kinases from Arabidopsis.</title>
        <authorList>
            <person name="Chen K."/>
            <person name="Fan B."/>
            <person name="Du L."/>
            <person name="Chen Z."/>
        </authorList>
    </citation>
    <scope>INDUCTION</scope>
</reference>
<reference key="6">
    <citation type="journal article" date="2016" name="PLoS ONE">
        <title>The Arabidopsis domain of unknown function 1218 (DUF1218) containing proteins, MODIFYING WALL LIGNIN-1 and 2 (At1g31720/MWL-1 and At4g19370/MWL-2) function redundantly to alter secondary cell wall lignin content.</title>
        <authorList>
            <person name="Mewalal R."/>
            <person name="Mizrachi E."/>
            <person name="Coetzee B."/>
            <person name="Mansfield S.D."/>
            <person name="Myburg A.A."/>
        </authorList>
    </citation>
    <scope>INTERACTION WITH MWL1</scope>
    <source>
        <strain>cv. Columbia</strain>
    </source>
</reference>
<feature type="signal peptide" evidence="2">
    <location>
        <begin position="1"/>
        <end position="20"/>
    </location>
</feature>
<feature type="chain" id="PRO_0000295066" description="Cysteine-rich receptor-like protein kinase 19">
    <location>
        <begin position="21"/>
        <end position="645"/>
    </location>
</feature>
<feature type="topological domain" description="Extracellular" evidence="2">
    <location>
        <begin position="21"/>
        <end position="262"/>
    </location>
</feature>
<feature type="transmembrane region" description="Helical" evidence="2">
    <location>
        <begin position="263"/>
        <end position="283"/>
    </location>
</feature>
<feature type="topological domain" description="Cytoplasmic" evidence="2">
    <location>
        <begin position="284"/>
        <end position="645"/>
    </location>
</feature>
<feature type="domain" description="Gnk2-homologous 1" evidence="4">
    <location>
        <begin position="24"/>
        <end position="129"/>
    </location>
</feature>
<feature type="domain" description="Gnk2-homologous 2" evidence="4">
    <location>
        <begin position="135"/>
        <end position="239"/>
    </location>
</feature>
<feature type="domain" description="Protein kinase" evidence="3">
    <location>
        <begin position="326"/>
        <end position="603"/>
    </location>
</feature>
<feature type="region of interest" description="Disordered" evidence="6">
    <location>
        <begin position="616"/>
        <end position="645"/>
    </location>
</feature>
<feature type="compositionally biased region" description="Polar residues" evidence="6">
    <location>
        <begin position="620"/>
        <end position="632"/>
    </location>
</feature>
<feature type="active site" description="Proton acceptor" evidence="3 5">
    <location>
        <position position="451"/>
    </location>
</feature>
<feature type="binding site" evidence="3">
    <location>
        <begin position="332"/>
        <end position="340"/>
    </location>
    <ligand>
        <name>ATP</name>
        <dbReference type="ChEBI" id="CHEBI:30616"/>
    </ligand>
</feature>
<feature type="binding site" evidence="3">
    <location>
        <position position="354"/>
    </location>
    <ligand>
        <name>ATP</name>
        <dbReference type="ChEBI" id="CHEBI:30616"/>
    </ligand>
</feature>
<feature type="modified residue" description="Phosphotyrosine" evidence="1">
    <location>
        <position position="399"/>
    </location>
</feature>
<feature type="modified residue" description="Phosphothreonine" evidence="1">
    <location>
        <position position="491"/>
    </location>
</feature>
<feature type="modified residue" description="Phosphotyrosine" evidence="1">
    <location>
        <position position="499"/>
    </location>
</feature>
<feature type="glycosylation site" description="N-linked (GlcNAc...) asparagine" evidence="2">
    <location>
        <position position="29"/>
    </location>
</feature>
<feature type="glycosylation site" description="N-linked (GlcNAc...) asparagine" evidence="2">
    <location>
        <position position="39"/>
    </location>
</feature>
<feature type="glycosylation site" description="N-linked (GlcNAc...) asparagine" evidence="2">
    <location>
        <position position="57"/>
    </location>
</feature>
<feature type="glycosylation site" description="N-linked (GlcNAc...) asparagine" evidence="2">
    <location>
        <position position="101"/>
    </location>
</feature>
<feature type="glycosylation site" description="N-linked (GlcNAc...) asparagine" evidence="2">
    <location>
        <position position="185"/>
    </location>
</feature>
<feature type="glycosylation site" description="N-linked (GlcNAc...) asparagine" evidence="2">
    <location>
        <position position="241"/>
    </location>
</feature>
<feature type="glycosylation site" description="N-linked (GlcNAc...) asparagine" evidence="2">
    <location>
        <position position="260"/>
    </location>
</feature>
<feature type="splice variant" id="VSP_026693" description="In isoform 2." evidence="9">
    <original>DGNDITT</original>
    <variation>VFFSRWE</variation>
    <location>
        <begin position="302"/>
        <end position="308"/>
    </location>
</feature>
<feature type="splice variant" id="VSP_026694" description="In isoform 2." evidence="9">
    <location>
        <begin position="309"/>
        <end position="645"/>
    </location>
</feature>
<protein>
    <recommendedName>
        <fullName>Cysteine-rich receptor-like protein kinase 19</fullName>
        <shortName>Cysteine-rich RLK19</shortName>
        <ecNumber>2.7.11.-</ecNumber>
    </recommendedName>
</protein>
<dbReference type="EC" id="2.7.11.-"/>
<dbReference type="EMBL" id="AL022347">
    <property type="protein sequence ID" value="CAA18474.1"/>
    <property type="status" value="ALT_SEQ"/>
    <property type="molecule type" value="Genomic_DNA"/>
</dbReference>
<dbReference type="EMBL" id="AL161559">
    <property type="protein sequence ID" value="CAB79282.1"/>
    <property type="status" value="ALT_SEQ"/>
    <property type="molecule type" value="Genomic_DNA"/>
</dbReference>
<dbReference type="EMBL" id="CP002687">
    <property type="protein sequence ID" value="AEE84731.1"/>
    <property type="molecule type" value="Genomic_DNA"/>
</dbReference>
<dbReference type="EMBL" id="CP002687">
    <property type="protein sequence ID" value="ANM67713.1"/>
    <property type="molecule type" value="Genomic_DNA"/>
</dbReference>
<dbReference type="EMBL" id="AK118799">
    <property type="protein sequence ID" value="BAC43390.1"/>
    <property type="molecule type" value="mRNA"/>
</dbReference>
<dbReference type="PIR" id="T04844">
    <property type="entry name" value="T04844"/>
</dbReference>
<dbReference type="RefSeq" id="NP_001329528.1">
    <molecule id="Q8GWJ7-1"/>
    <property type="nucleotide sequence ID" value="NM_001341593.1"/>
</dbReference>
<dbReference type="RefSeq" id="NP_194058.2">
    <molecule id="Q8GWJ7-1"/>
    <property type="nucleotide sequence ID" value="NM_118456.3"/>
</dbReference>
<dbReference type="SMR" id="Q8GWJ7"/>
<dbReference type="BioGRID" id="13715">
    <property type="interactions" value="24"/>
</dbReference>
<dbReference type="FunCoup" id="Q8GWJ7">
    <property type="interactions" value="239"/>
</dbReference>
<dbReference type="IntAct" id="Q8GWJ7">
    <property type="interactions" value="24"/>
</dbReference>
<dbReference type="STRING" id="3702.Q8GWJ7"/>
<dbReference type="GlyCosmos" id="Q8GWJ7">
    <property type="glycosylation" value="7 sites, No reported glycans"/>
</dbReference>
<dbReference type="GlyGen" id="Q8GWJ7">
    <property type="glycosylation" value="8 sites"/>
</dbReference>
<dbReference type="iPTMnet" id="Q8GWJ7"/>
<dbReference type="PaxDb" id="3702-AT4G23270.1"/>
<dbReference type="ProteomicsDB" id="220451">
    <molecule id="Q8GWJ7-1"/>
</dbReference>
<dbReference type="EnsemblPlants" id="AT4G23270.1">
    <molecule id="Q8GWJ7-1"/>
    <property type="protein sequence ID" value="AT4G23270.1"/>
    <property type="gene ID" value="AT4G23270"/>
</dbReference>
<dbReference type="EnsemblPlants" id="AT4G23270.2">
    <molecule id="Q8GWJ7-1"/>
    <property type="protein sequence ID" value="AT4G23270.2"/>
    <property type="gene ID" value="AT4G23270"/>
</dbReference>
<dbReference type="GeneID" id="828426"/>
<dbReference type="Gramene" id="AT4G23270.1">
    <molecule id="Q8GWJ7-1"/>
    <property type="protein sequence ID" value="AT4G23270.1"/>
    <property type="gene ID" value="AT4G23270"/>
</dbReference>
<dbReference type="Gramene" id="AT4G23270.2">
    <molecule id="Q8GWJ7-1"/>
    <property type="protein sequence ID" value="AT4G23270.2"/>
    <property type="gene ID" value="AT4G23270"/>
</dbReference>
<dbReference type="KEGG" id="ath:AT4G23270"/>
<dbReference type="Araport" id="AT4G23270"/>
<dbReference type="TAIR" id="AT4G23270">
    <property type="gene designation" value="CRK19"/>
</dbReference>
<dbReference type="eggNOG" id="ENOG502QWDY">
    <property type="taxonomic scope" value="Eukaryota"/>
</dbReference>
<dbReference type="HOGENOM" id="CLU_000288_35_3_1"/>
<dbReference type="InParanoid" id="Q8GWJ7"/>
<dbReference type="OMA" id="QDDYQTN"/>
<dbReference type="PhylomeDB" id="Q8GWJ7"/>
<dbReference type="PRO" id="PR:Q8GWJ7"/>
<dbReference type="Proteomes" id="UP000006548">
    <property type="component" value="Chromosome 4"/>
</dbReference>
<dbReference type="ExpressionAtlas" id="Q8GWJ7">
    <property type="expression patterns" value="baseline and differential"/>
</dbReference>
<dbReference type="GO" id="GO:0016020">
    <property type="term" value="C:membrane"/>
    <property type="evidence" value="ECO:0007669"/>
    <property type="project" value="UniProtKB-SubCell"/>
</dbReference>
<dbReference type="GO" id="GO:0005524">
    <property type="term" value="F:ATP binding"/>
    <property type="evidence" value="ECO:0007669"/>
    <property type="project" value="UniProtKB-KW"/>
</dbReference>
<dbReference type="GO" id="GO:0106310">
    <property type="term" value="F:protein serine kinase activity"/>
    <property type="evidence" value="ECO:0007669"/>
    <property type="project" value="RHEA"/>
</dbReference>
<dbReference type="GO" id="GO:0004674">
    <property type="term" value="F:protein serine/threonine kinase activity"/>
    <property type="evidence" value="ECO:0007669"/>
    <property type="project" value="UniProtKB-KW"/>
</dbReference>
<dbReference type="GO" id="GO:0042742">
    <property type="term" value="P:defense response to bacterium"/>
    <property type="evidence" value="ECO:0000270"/>
    <property type="project" value="TAIR"/>
</dbReference>
<dbReference type="GO" id="GO:0009751">
    <property type="term" value="P:response to salicylic acid"/>
    <property type="evidence" value="ECO:0000270"/>
    <property type="project" value="TAIR"/>
</dbReference>
<dbReference type="CDD" id="cd23509">
    <property type="entry name" value="Gnk2-like"/>
    <property type="match status" value="2"/>
</dbReference>
<dbReference type="CDD" id="cd14066">
    <property type="entry name" value="STKc_IRAK"/>
    <property type="match status" value="1"/>
</dbReference>
<dbReference type="FunFam" id="1.10.510.10:FF:000129">
    <property type="entry name" value="cysteine-rich receptor-like protein kinase 10"/>
    <property type="match status" value="1"/>
</dbReference>
<dbReference type="FunFam" id="3.30.430.20:FF:000003">
    <property type="entry name" value="Cysteine-rich RLK (RECEPTOR-like protein kinase) 10"/>
    <property type="match status" value="1"/>
</dbReference>
<dbReference type="FunFam" id="3.30.200.20:FF:000727">
    <property type="entry name" value="Cysteine-rich RLK (RECEPTOR-like protein kinase) 23"/>
    <property type="match status" value="1"/>
</dbReference>
<dbReference type="Gene3D" id="3.30.430.20">
    <property type="entry name" value="Gnk2 domain, C-X8-C-X2-C motif"/>
    <property type="match status" value="2"/>
</dbReference>
<dbReference type="Gene3D" id="3.30.200.20">
    <property type="entry name" value="Phosphorylase Kinase, domain 1"/>
    <property type="match status" value="1"/>
</dbReference>
<dbReference type="Gene3D" id="1.10.510.10">
    <property type="entry name" value="Transferase(Phosphotransferase) domain 1"/>
    <property type="match status" value="1"/>
</dbReference>
<dbReference type="InterPro" id="IPR002902">
    <property type="entry name" value="GNK2"/>
</dbReference>
<dbReference type="InterPro" id="IPR038408">
    <property type="entry name" value="GNK2_sf"/>
</dbReference>
<dbReference type="InterPro" id="IPR011009">
    <property type="entry name" value="Kinase-like_dom_sf"/>
</dbReference>
<dbReference type="InterPro" id="IPR000719">
    <property type="entry name" value="Prot_kinase_dom"/>
</dbReference>
<dbReference type="InterPro" id="IPR017441">
    <property type="entry name" value="Protein_kinase_ATP_BS"/>
</dbReference>
<dbReference type="InterPro" id="IPR001245">
    <property type="entry name" value="Ser-Thr/Tyr_kinase_cat_dom"/>
</dbReference>
<dbReference type="InterPro" id="IPR008271">
    <property type="entry name" value="Ser/Thr_kinase_AS"/>
</dbReference>
<dbReference type="PANTHER" id="PTHR27002:SF997">
    <property type="entry name" value="CYSTEINE-RICH RECEPTOR-LIKE PROTEIN KINASE 13-RELATED"/>
    <property type="match status" value="1"/>
</dbReference>
<dbReference type="PANTHER" id="PTHR27002">
    <property type="entry name" value="RECEPTOR-LIKE SERINE/THREONINE-PROTEIN KINASE SD1-8"/>
    <property type="match status" value="1"/>
</dbReference>
<dbReference type="Pfam" id="PF07714">
    <property type="entry name" value="PK_Tyr_Ser-Thr"/>
    <property type="match status" value="1"/>
</dbReference>
<dbReference type="Pfam" id="PF01657">
    <property type="entry name" value="Stress-antifung"/>
    <property type="match status" value="2"/>
</dbReference>
<dbReference type="SMART" id="SM00220">
    <property type="entry name" value="S_TKc"/>
    <property type="match status" value="1"/>
</dbReference>
<dbReference type="SUPFAM" id="SSF56112">
    <property type="entry name" value="Protein kinase-like (PK-like)"/>
    <property type="match status" value="1"/>
</dbReference>
<dbReference type="PROSITE" id="PS51473">
    <property type="entry name" value="GNK2"/>
    <property type="match status" value="2"/>
</dbReference>
<dbReference type="PROSITE" id="PS00107">
    <property type="entry name" value="PROTEIN_KINASE_ATP"/>
    <property type="match status" value="1"/>
</dbReference>
<dbReference type="PROSITE" id="PS50011">
    <property type="entry name" value="PROTEIN_KINASE_DOM"/>
    <property type="match status" value="1"/>
</dbReference>
<dbReference type="PROSITE" id="PS00108">
    <property type="entry name" value="PROTEIN_KINASE_ST"/>
    <property type="match status" value="1"/>
</dbReference>
<gene>
    <name type="primary">CRK19</name>
    <name type="ordered locus">At4g23270</name>
    <name type="ORF">F21P8.160</name>
</gene>
<keyword id="KW-0025">Alternative splicing</keyword>
<keyword id="KW-0067">ATP-binding</keyword>
<keyword id="KW-0325">Glycoprotein</keyword>
<keyword id="KW-0418">Kinase</keyword>
<keyword id="KW-0472">Membrane</keyword>
<keyword id="KW-0547">Nucleotide-binding</keyword>
<keyword id="KW-0597">Phosphoprotein</keyword>
<keyword id="KW-0675">Receptor</keyword>
<keyword id="KW-1185">Reference proteome</keyword>
<keyword id="KW-0677">Repeat</keyword>
<keyword id="KW-0723">Serine/threonine-protein kinase</keyword>
<keyword id="KW-0732">Signal</keyword>
<keyword id="KW-0808">Transferase</keyword>
<keyword id="KW-0812">Transmembrane</keyword>
<keyword id="KW-1133">Transmembrane helix</keyword>
<organism>
    <name type="scientific">Arabidopsis thaliana</name>
    <name type="common">Mouse-ear cress</name>
    <dbReference type="NCBI Taxonomy" id="3702"/>
    <lineage>
        <taxon>Eukaryota</taxon>
        <taxon>Viridiplantae</taxon>
        <taxon>Streptophyta</taxon>
        <taxon>Embryophyta</taxon>
        <taxon>Tracheophyta</taxon>
        <taxon>Spermatophyta</taxon>
        <taxon>Magnoliopsida</taxon>
        <taxon>eudicotyledons</taxon>
        <taxon>Gunneridae</taxon>
        <taxon>Pentapetalae</taxon>
        <taxon>rosids</taxon>
        <taxon>malvids</taxon>
        <taxon>Brassicales</taxon>
        <taxon>Brassicaceae</taxon>
        <taxon>Camelineae</taxon>
        <taxon>Arabidopsis</taxon>
    </lineage>
</organism>
<sequence length="645" mass="71620">MSSLISFIFLFLFSSITASAQNTFYLYHNCSVTTTFSSNSTYSTNLKTLLSSLSSLNASSYSTGFQTATAGQAPDRVTGLFLCRVDVSSEVCRSCVTFAVNETLTRCPKDKEGVFYYEQCLLRYSNRNIVATLNTDGGMFMQSARNPLSVKQDQFRDLVLTPMNLAAVEAARSFKKWAVRKIDLNASQSLYGMVRCTPDLREQDCLDCLKIGINQVTYDKIGGRILLPSCASRYDNYAFYNESNVGTPQDSSPRPGKGGNSSVIIIAVVVPITVLFLLLVAVFSVRAKNKRTLNEKEPVAEDGNDITTAGSLQFDFKAIEAATNCFLPINKLGQGGFGEVYKGTLSSGLQVAVKRLSKTSGQGEKEFENEVVVVAKLQHRNLVKLLGYCLEGEEKILVYEFVPNKSLDHFLFDSTMKMKLDWTRRYKIIGGIARGILYLHQDSRLTIIHRDLKAGNILLDDDMNPKIADFGMARIFGMDQTEAMTRRVVGTYGYMSPEYAMYGQFSMKSDVYSFGVLVLEIISGMKNSSLYQMDESVGNLVTYTWRLWSNGSPSELVDPSFGDNYQTSEITRCIHIALLCVQEDAEDRPTMSSIVQMLTTSLIALAEPRPPGFFFRSKQEQAGPSIDSSTHCSVDEASITRVTPR</sequence>